<protein>
    <recommendedName>
        <fullName>Alveolysin</fullName>
    </recommendedName>
    <alternativeName>
        <fullName>Thiol-activated cytolysin</fullName>
    </alternativeName>
</protein>
<keyword id="KW-0204">Cytolysis</keyword>
<keyword id="KW-0903">Direct protein sequencing</keyword>
<keyword id="KW-0354">Hemolysis</keyword>
<keyword id="KW-1032">Host cell membrane</keyword>
<keyword id="KW-1043">Host membrane</keyword>
<keyword id="KW-0446">Lipid-binding</keyword>
<keyword id="KW-0472">Membrane</keyword>
<keyword id="KW-0964">Secreted</keyword>
<keyword id="KW-0732">Signal</keyword>
<keyword id="KW-0800">Toxin</keyword>
<keyword id="KW-0812">Transmembrane</keyword>
<keyword id="KW-1134">Transmembrane beta strand</keyword>
<keyword id="KW-0843">Virulence</keyword>
<name>TACY_PAEAL</name>
<proteinExistence type="evidence at protein level"/>
<evidence type="ECO:0000250" key="1">
    <source>
        <dbReference type="UniProtKB" id="P0C2E9"/>
    </source>
</evidence>
<evidence type="ECO:0000250" key="2">
    <source>
        <dbReference type="UniProtKB" id="Q04IN8"/>
    </source>
</evidence>
<evidence type="ECO:0000269" key="3">
    <source>
    </source>
</evidence>
<evidence type="ECO:0000269" key="4">
    <source ref="2"/>
</evidence>
<evidence type="ECO:0000305" key="5"/>
<organism>
    <name type="scientific">Paenibacillus alvei</name>
    <name type="common">Bacillus alvei</name>
    <dbReference type="NCBI Taxonomy" id="44250"/>
    <lineage>
        <taxon>Bacteria</taxon>
        <taxon>Bacillati</taxon>
        <taxon>Bacillota</taxon>
        <taxon>Bacilli</taxon>
        <taxon>Bacillales</taxon>
        <taxon>Paenibacillaceae</taxon>
        <taxon>Paenibacillus</taxon>
    </lineage>
</organism>
<accession>P23564</accession>
<comment type="function">
    <text evidence="1 3">A cholesterol-dependent toxin that causes cytolysis by forming pores in cholesterol containing host membranes (PubMed:6411708). After binding to target membranes, the protein undergoes a major conformation change, leading to its insertion in the host membrane and formation of an oligomeric pore complex. Cholesterol is required for binding to host cell membranes, membrane insertion and pore formation; cholesterol binding is mediated by a Thr-Leu pair in the C-terminus. Can be reversibly inactivated by oxidation (By similarity).</text>
</comment>
<comment type="activity regulation">
    <text evidence="3">Inhibited by cholesterol and thiol reagents.</text>
</comment>
<comment type="subunit">
    <text evidence="2">Homooligomeric pore complex of 35 to 50 subunits; when inserted in the host membrane.</text>
</comment>
<comment type="subcellular location">
    <subcellularLocation>
        <location evidence="3">Secreted</location>
    </subcellularLocation>
    <subcellularLocation>
        <location evidence="3">Host cell membrane</location>
        <topology evidence="3">Multi-pass membrane protein</topology>
    </subcellularLocation>
    <text evidence="2">Secreted as soluble protein that then inserts into the host cell membrane and forms pores formed by transmembrane beta-strands.</text>
</comment>
<comment type="similarity">
    <text evidence="5">Belongs to the cholesterol-dependent cytolysin family.</text>
</comment>
<gene>
    <name type="primary">alv</name>
</gene>
<dbReference type="EMBL" id="M62709">
    <property type="protein sequence ID" value="AAA22224.1"/>
    <property type="molecule type" value="Genomic_DNA"/>
</dbReference>
<dbReference type="PIR" id="A37858">
    <property type="entry name" value="A37858"/>
</dbReference>
<dbReference type="RefSeq" id="WP_005550140.1">
    <property type="nucleotide sequence ID" value="NZ_JARLKX010000054.1"/>
</dbReference>
<dbReference type="SMR" id="P23564"/>
<dbReference type="TCDB" id="1.C.12.1.2">
    <property type="family name" value="the thiol-activated cholesterol-dependent cytolysin (cdc) family"/>
</dbReference>
<dbReference type="GeneID" id="94490438"/>
<dbReference type="GO" id="GO:0005576">
    <property type="term" value="C:extracellular region"/>
    <property type="evidence" value="ECO:0007669"/>
    <property type="project" value="UniProtKB-SubCell"/>
</dbReference>
<dbReference type="GO" id="GO:0020002">
    <property type="term" value="C:host cell plasma membrane"/>
    <property type="evidence" value="ECO:0007669"/>
    <property type="project" value="UniProtKB-SubCell"/>
</dbReference>
<dbReference type="GO" id="GO:0016020">
    <property type="term" value="C:membrane"/>
    <property type="evidence" value="ECO:0007669"/>
    <property type="project" value="UniProtKB-KW"/>
</dbReference>
<dbReference type="GO" id="GO:0015485">
    <property type="term" value="F:cholesterol binding"/>
    <property type="evidence" value="ECO:0007669"/>
    <property type="project" value="InterPro"/>
</dbReference>
<dbReference type="GO" id="GO:0090729">
    <property type="term" value="F:toxin activity"/>
    <property type="evidence" value="ECO:0007669"/>
    <property type="project" value="UniProtKB-KW"/>
</dbReference>
<dbReference type="GO" id="GO:0031640">
    <property type="term" value="P:killing of cells of another organism"/>
    <property type="evidence" value="ECO:0007669"/>
    <property type="project" value="UniProtKB-KW"/>
</dbReference>
<dbReference type="Gene3D" id="3.30.1040.20">
    <property type="match status" value="1"/>
</dbReference>
<dbReference type="Gene3D" id="3.40.30.40">
    <property type="entry name" value="Perfringolysin"/>
    <property type="match status" value="1"/>
</dbReference>
<dbReference type="Gene3D" id="2.60.40.1430">
    <property type="entry name" value="Perfringolysin, domain 4"/>
    <property type="match status" value="1"/>
</dbReference>
<dbReference type="Gene3D" id="3.90.840.10">
    <property type="entry name" value="Thiol-activated cytolysin superfamily/Thiol-activated cytolysin, alpha-beta domain"/>
    <property type="match status" value="1"/>
</dbReference>
<dbReference type="InterPro" id="IPR035390">
    <property type="entry name" value="Thiol_cytolys_C"/>
</dbReference>
<dbReference type="InterPro" id="IPR038700">
    <property type="entry name" value="Thiol_cytolys_C_sf"/>
</dbReference>
<dbReference type="InterPro" id="IPR001869">
    <property type="entry name" value="Thiol_cytolysin"/>
</dbReference>
<dbReference type="InterPro" id="IPR036363">
    <property type="entry name" value="Thiol_cytolysin_ab_sf"/>
</dbReference>
<dbReference type="InterPro" id="IPR036359">
    <property type="entry name" value="Thiol_cytolysin_sf"/>
</dbReference>
<dbReference type="Pfam" id="PF17440">
    <property type="entry name" value="Thiol_cytolys_C"/>
    <property type="match status" value="1"/>
</dbReference>
<dbReference type="Pfam" id="PF01289">
    <property type="entry name" value="Thiol_cytolysin"/>
    <property type="match status" value="1"/>
</dbReference>
<dbReference type="PRINTS" id="PR01400">
    <property type="entry name" value="TACYTOLYSIN"/>
</dbReference>
<dbReference type="SUPFAM" id="SSF56978">
    <property type="entry name" value="Perfringolysin"/>
    <property type="match status" value="1"/>
</dbReference>
<dbReference type="PROSITE" id="PS00481">
    <property type="entry name" value="THIOL_CYTOLYSINS"/>
    <property type="match status" value="1"/>
</dbReference>
<feature type="signal peptide" evidence="4">
    <location>
        <begin position="1"/>
        <end position="32"/>
    </location>
</feature>
<feature type="chain" id="PRO_0000034099" description="Alveolysin">
    <location>
        <begin position="33"/>
        <end position="501"/>
    </location>
</feature>
<feature type="transmembrane region" description="Beta stranded" evidence="2">
    <location>
        <begin position="191"/>
        <end position="204"/>
    </location>
</feature>
<feature type="transmembrane region" description="Beta stranded" evidence="2">
    <location>
        <begin position="211"/>
        <end position="220"/>
    </location>
</feature>
<feature type="transmembrane region" description="Beta stranded" evidence="2">
    <location>
        <begin position="289"/>
        <end position="298"/>
    </location>
</feature>
<feature type="transmembrane region" description="Beta stranded" evidence="2">
    <location>
        <begin position="306"/>
        <end position="318"/>
    </location>
</feature>
<feature type="short sequence motif" description="Conserved undecapeptide" evidence="5">
    <location>
        <begin position="460"/>
        <end position="470"/>
    </location>
</feature>
<feature type="short sequence motif" description="Cholesterol binding" evidence="1">
    <location>
        <begin position="492"/>
        <end position="493"/>
    </location>
</feature>
<feature type="sequence conflict" description="In Ref. 2; AA sequence." evidence="5" ref="2">
    <original>A</original>
    <variation>L</variation>
    <location>
        <position position="56"/>
    </location>
</feature>
<reference key="1">
    <citation type="journal article" date="1990" name="J. Bacteriol.">
        <title>Alveolysin, the thiol-activated toxin of Bacillus alvei, is homologous to listeriolysin O, perfringolysin O, pneumolysin, and streptolysin O and contains a single cysteine.</title>
        <authorList>
            <person name="Geoffroy C."/>
            <person name="Mengaud J."/>
            <person name="Alouf J.E."/>
            <person name="Cossart P."/>
        </authorList>
    </citation>
    <scope>NUCLEOTIDE SEQUENCE [GENOMIC DNA]</scope>
</reference>
<reference key="2">
    <citation type="book" date="1990" name="Bacterial protein toxins">
        <editorList>
            <person name="Rappuoli R."/>
            <person name="Alouf J.E."/>
            <person name="Falmagne P."/>
        </editorList>
        <authorList>
            <person name="Alouf J.E."/>
            <person name="Geoffroy C."/>
            <person name="Gilles A.M."/>
            <person name="Falmagne P."/>
        </authorList>
    </citation>
    <scope>PROTEIN SEQUENCE OF 33-60</scope>
</reference>
<reference key="3">
    <citation type="journal article" date="1983" name="J. Biol. Chem.">
        <title>Selective purification by thiol-disulfide interchange chromatography of alveolysin, a sulfhydryl-activated toxin of Bacillus alvei. Toxin properties and interaction with cholesterol and liposomes.</title>
        <authorList>
            <person name="Geoffroy C."/>
            <person name="Alouf J.E."/>
        </authorList>
    </citation>
    <scope>FUNCTION</scope>
    <scope>ACTIVITY REGULATION</scope>
    <scope>SUBCELLULAR LOCATION</scope>
</reference>
<sequence>MKKKSNHLKGRKVLVSLLVSLQVFAFASISSAAPTEPNDIDMGIAGLNYNRNEVLAIQGDQISSFVPKEGIQSNGKFIVVERDKKSLTTSPVDISIVDSITNRTYPGAIQLANKDFADNQPSLVMAARKPLDISIDLPGLKNENTISVQNPNYGTVSSAIDQLVSTWGEKYSSTHTLPARLQYAESMVYSQNQISSALNVNAKVLNGTLGIDFNAVANGEKKVMVAAYKQIFYTVSAGLPNNPSDLFDDSVTFAELARKGVSNEAPPLMVSNVAYGRTIYVKLETTSKSNDVQTAFKLLLNNPSIQASGQYKDIYENSSFTAVVLGGDAQTHNQVVTKDFNVIQSVIKDNAQFSSKNPAYPISYTSVFLKDNSIAAVHNNTEYIETKTTEYSKGKIKLDHSGAYVAQFEVYWDEFSYDADGQEIVTRKSWDGNWRDRSAHFSTEIPLPPNAKNIRIFARECTGLAWEWWRTVVDEYNVPLASDINVSIWGTTLYPKSSITH</sequence>